<name>EFTS_ANTSP</name>
<evidence type="ECO:0000255" key="1">
    <source>
        <dbReference type="HAMAP-Rule" id="MF_03135"/>
    </source>
</evidence>
<organism>
    <name type="scientific">Antithamnion sp.</name>
    <name type="common">Red alga</name>
    <dbReference type="NCBI Taxonomy" id="2767"/>
    <lineage>
        <taxon>Eukaryota</taxon>
        <taxon>Rhodophyta</taxon>
        <taxon>Florideophyceae</taxon>
        <taxon>Rhodymeniophycidae</taxon>
        <taxon>Ceramiales</taxon>
        <taxon>Ceramiaceae</taxon>
        <taxon>Antithamnion</taxon>
    </lineage>
</organism>
<dbReference type="EMBL" id="X63382">
    <property type="protein sequence ID" value="CAA44987.1"/>
    <property type="molecule type" value="Genomic_DNA"/>
</dbReference>
<dbReference type="PIR" id="S26963">
    <property type="entry name" value="S26963"/>
</dbReference>
<dbReference type="SMR" id="Q02855"/>
<dbReference type="GO" id="GO:0009507">
    <property type="term" value="C:chloroplast"/>
    <property type="evidence" value="ECO:0007669"/>
    <property type="project" value="UniProtKB-SubCell"/>
</dbReference>
<dbReference type="GO" id="GO:0005739">
    <property type="term" value="C:mitochondrion"/>
    <property type="evidence" value="ECO:0007669"/>
    <property type="project" value="GOC"/>
</dbReference>
<dbReference type="GO" id="GO:0003746">
    <property type="term" value="F:translation elongation factor activity"/>
    <property type="evidence" value="ECO:0007669"/>
    <property type="project" value="UniProtKB-KW"/>
</dbReference>
<dbReference type="GO" id="GO:0070125">
    <property type="term" value="P:mitochondrial translational elongation"/>
    <property type="evidence" value="ECO:0007669"/>
    <property type="project" value="TreeGrafter"/>
</dbReference>
<dbReference type="Gene3D" id="1.10.286.20">
    <property type="match status" value="1"/>
</dbReference>
<dbReference type="Gene3D" id="3.30.479.20">
    <property type="entry name" value="Elongation factor Ts, dimerisation domain"/>
    <property type="match status" value="1"/>
</dbReference>
<dbReference type="HAMAP" id="MF_00050">
    <property type="entry name" value="EF_Ts"/>
    <property type="match status" value="1"/>
</dbReference>
<dbReference type="InterPro" id="IPR036402">
    <property type="entry name" value="EF-Ts_dimer_sf"/>
</dbReference>
<dbReference type="InterPro" id="IPR001816">
    <property type="entry name" value="Transl_elong_EFTs/EF1B"/>
</dbReference>
<dbReference type="InterPro" id="IPR014039">
    <property type="entry name" value="Transl_elong_EFTs/EF1B_dimer"/>
</dbReference>
<dbReference type="PANTHER" id="PTHR11741">
    <property type="entry name" value="ELONGATION FACTOR TS"/>
    <property type="match status" value="1"/>
</dbReference>
<dbReference type="PANTHER" id="PTHR11741:SF10">
    <property type="entry name" value="POLYPROTEIN OF EF-TS, CHLOROPLASTIC"/>
    <property type="match status" value="1"/>
</dbReference>
<dbReference type="Pfam" id="PF00889">
    <property type="entry name" value="EF_TS"/>
    <property type="match status" value="1"/>
</dbReference>
<dbReference type="SUPFAM" id="SSF54713">
    <property type="entry name" value="Elongation factor Ts (EF-Ts), dimerisation domain"/>
    <property type="match status" value="1"/>
</dbReference>
<reference key="1">
    <citation type="journal article" date="1992" name="J. Mol. Biol.">
        <title>Large ATP synthase operon of the red alga Antithamnion sp. resembles the corresponding operon in cyanobacteria.</title>
        <authorList>
            <person name="Kostrzewa M."/>
            <person name="Zetsche K."/>
        </authorList>
    </citation>
    <scope>NUCLEOTIDE SEQUENCE [GENOMIC DNA]</scope>
    <source>
        <strain>LB 95.79</strain>
    </source>
</reference>
<gene>
    <name type="primary">tsf</name>
</gene>
<feature type="chain" id="PRO_0000161243" description="Elongation factor Ts, chloroplastic">
    <location>
        <begin position="1" status="less than"/>
        <end position="87"/>
    </location>
</feature>
<feature type="non-terminal residue">
    <location>
        <position position="1"/>
    </location>
</feature>
<protein>
    <recommendedName>
        <fullName>Elongation factor Ts, chloroplastic</fullName>
        <shortName evidence="1">EF-Ts</shortName>
    </recommendedName>
</protein>
<comment type="function">
    <text evidence="1">Associates with the EF-Tu.GDP complex and induces the exchange of GDP to GTP. It remains bound to the aminoacyl-tRNA.EF-Tu.GTP complex up to the GTP hydrolysis stage on the ribosome.</text>
</comment>
<comment type="subcellular location">
    <subcellularLocation>
        <location>Plastid</location>
        <location>Chloroplast</location>
    </subcellularLocation>
</comment>
<comment type="similarity">
    <text evidence="1">Belongs to the EF-Ts family.</text>
</comment>
<geneLocation type="chloroplast"/>
<sequence length="87" mass="10096">DLLNKPKEIKEKILIGRVEKRLKELSLMDQTFIKDSNLSIEELIKQNISLLGENIKIRRFERFVLGEGLNKRSDDFANEVAQIINAN</sequence>
<accession>Q02855</accession>
<proteinExistence type="inferred from homology"/>
<keyword id="KW-0150">Chloroplast</keyword>
<keyword id="KW-0251">Elongation factor</keyword>
<keyword id="KW-0934">Plastid</keyword>
<keyword id="KW-0648">Protein biosynthesis</keyword>